<accession>Q5HI44</accession>
<dbReference type="EMBL" id="CP000046">
    <property type="protein sequence ID" value="AAW36368.1"/>
    <property type="molecule type" value="Genomic_DNA"/>
</dbReference>
<dbReference type="RefSeq" id="WP_000661906.1">
    <property type="nucleotide sequence ID" value="NZ_JBGOFO010000005.1"/>
</dbReference>
<dbReference type="SMR" id="Q5HI44"/>
<dbReference type="KEGG" id="sac:SACOL0680"/>
<dbReference type="HOGENOM" id="CLU_101659_1_1_9"/>
<dbReference type="Proteomes" id="UP000000530">
    <property type="component" value="Chromosome"/>
</dbReference>
<dbReference type="GO" id="GO:0005886">
    <property type="term" value="C:plasma membrane"/>
    <property type="evidence" value="ECO:0007669"/>
    <property type="project" value="UniProtKB-SubCell"/>
</dbReference>
<dbReference type="GO" id="GO:0015297">
    <property type="term" value="F:antiporter activity"/>
    <property type="evidence" value="ECO:0007669"/>
    <property type="project" value="UniProtKB-KW"/>
</dbReference>
<dbReference type="GO" id="GO:0006811">
    <property type="term" value="P:monoatomic ion transport"/>
    <property type="evidence" value="ECO:0007669"/>
    <property type="project" value="UniProtKB-KW"/>
</dbReference>
<dbReference type="InterPro" id="IPR050622">
    <property type="entry name" value="CPA3_antiporter_subunitB"/>
</dbReference>
<dbReference type="InterPro" id="IPR007182">
    <property type="entry name" value="MnhB"/>
</dbReference>
<dbReference type="NCBIfam" id="NF009223">
    <property type="entry name" value="PRK12573.1"/>
    <property type="match status" value="1"/>
</dbReference>
<dbReference type="NCBIfam" id="NF009224">
    <property type="entry name" value="PRK12574.1"/>
    <property type="match status" value="1"/>
</dbReference>
<dbReference type="PANTHER" id="PTHR33932">
    <property type="entry name" value="NA(+)/H(+) ANTIPORTER SUBUNIT B"/>
    <property type="match status" value="1"/>
</dbReference>
<dbReference type="PANTHER" id="PTHR33932:SF4">
    <property type="entry name" value="NA(+)_H(+) ANTIPORTER SUBUNIT B"/>
    <property type="match status" value="1"/>
</dbReference>
<dbReference type="Pfam" id="PF04039">
    <property type="entry name" value="MnhB"/>
    <property type="match status" value="1"/>
</dbReference>
<protein>
    <recommendedName>
        <fullName>Putative antiporter subunit mnhB2</fullName>
    </recommendedName>
    <alternativeName>
        <fullName>Mrp complex subunit B2</fullName>
    </alternativeName>
    <alternativeName>
        <fullName>Putative NADH-ubiquinone oxidoreductase subunit mnhB2</fullName>
    </alternativeName>
</protein>
<reference key="1">
    <citation type="journal article" date="2005" name="J. Bacteriol.">
        <title>Insights on evolution of virulence and resistance from the complete genome analysis of an early methicillin-resistant Staphylococcus aureus strain and a biofilm-producing methicillin-resistant Staphylococcus epidermidis strain.</title>
        <authorList>
            <person name="Gill S.R."/>
            <person name="Fouts D.E."/>
            <person name="Archer G.L."/>
            <person name="Mongodin E.F."/>
            <person name="DeBoy R.T."/>
            <person name="Ravel J."/>
            <person name="Paulsen I.T."/>
            <person name="Kolonay J.F."/>
            <person name="Brinkac L.M."/>
            <person name="Beanan M.J."/>
            <person name="Dodson R.J."/>
            <person name="Daugherty S.C."/>
            <person name="Madupu R."/>
            <person name="Angiuoli S.V."/>
            <person name="Durkin A.S."/>
            <person name="Haft D.H."/>
            <person name="Vamathevan J.J."/>
            <person name="Khouri H."/>
            <person name="Utterback T.R."/>
            <person name="Lee C."/>
            <person name="Dimitrov G."/>
            <person name="Jiang L."/>
            <person name="Qin H."/>
            <person name="Weidman J."/>
            <person name="Tran K."/>
            <person name="Kang K.H."/>
            <person name="Hance I.R."/>
            <person name="Nelson K.E."/>
            <person name="Fraser C.M."/>
        </authorList>
    </citation>
    <scope>NUCLEOTIDE SEQUENCE [LARGE SCALE GENOMIC DNA]</scope>
    <source>
        <strain>COL</strain>
    </source>
</reference>
<proteinExistence type="inferred from homology"/>
<organism>
    <name type="scientific">Staphylococcus aureus (strain COL)</name>
    <dbReference type="NCBI Taxonomy" id="93062"/>
    <lineage>
        <taxon>Bacteria</taxon>
        <taxon>Bacillati</taxon>
        <taxon>Bacillota</taxon>
        <taxon>Bacilli</taxon>
        <taxon>Bacillales</taxon>
        <taxon>Staphylococcaceae</taxon>
        <taxon>Staphylococcus</taxon>
    </lineage>
</organism>
<comment type="subunit">
    <text evidence="1">May form a heterooligomeric complex that consists of seven subunits: mnhA2, mnhB2, mnhC2, mnhD2, mnhE2, mnhF2 and mnhG2.</text>
</comment>
<comment type="subcellular location">
    <subcellularLocation>
        <location evidence="3">Cell membrane</location>
        <topology evidence="3">Multi-pass membrane protein</topology>
    </subcellularLocation>
</comment>
<comment type="similarity">
    <text evidence="3">Belongs to the CPA3 antiporters (TC 2.A.63) subunit B family.</text>
</comment>
<gene>
    <name type="primary">mnhB2</name>
    <name type="synonym">mrpB2</name>
    <name type="ordered locus">SACOL0680</name>
</gene>
<keyword id="KW-0050">Antiport</keyword>
<keyword id="KW-1003">Cell membrane</keyword>
<keyword id="KW-0406">Ion transport</keyword>
<keyword id="KW-0472">Membrane</keyword>
<keyword id="KW-0812">Transmembrane</keyword>
<keyword id="KW-1133">Transmembrane helix</keyword>
<keyword id="KW-0813">Transport</keyword>
<feature type="chain" id="PRO_0000372268" description="Putative antiporter subunit mnhB2">
    <location>
        <begin position="1"/>
        <end position="141"/>
    </location>
</feature>
<feature type="transmembrane region" description="Helical" evidence="2">
    <location>
        <begin position="10"/>
        <end position="30"/>
    </location>
</feature>
<feature type="transmembrane region" description="Helical" evidence="2">
    <location>
        <begin position="35"/>
        <end position="55"/>
    </location>
</feature>
<feature type="transmembrane region" description="Helical" evidence="2">
    <location>
        <begin position="70"/>
        <end position="90"/>
    </location>
</feature>
<feature type="transmembrane region" description="Helical" evidence="2">
    <location>
        <begin position="114"/>
        <end position="134"/>
    </location>
</feature>
<evidence type="ECO:0000250" key="1"/>
<evidence type="ECO:0000255" key="2"/>
<evidence type="ECO:0000305" key="3"/>
<name>MNHB2_STAAC</name>
<sequence>MKENDVVLRTVTKLVVFILLTFGFYVFFAGHNNPGGGFIGGLIFSSAFILMFLAFNVEEVLESLPIDFRILMIIGALVSSITAIIPMFFGKPFLSQYETTWILPILGQIHVSTITLFELGILFSVVGVIVTVMLSLSGGRS</sequence>